<organism>
    <name type="scientific">Blochmanniella pennsylvanica (strain BPEN)</name>
    <dbReference type="NCBI Taxonomy" id="291272"/>
    <lineage>
        <taxon>Bacteria</taxon>
        <taxon>Pseudomonadati</taxon>
        <taxon>Pseudomonadota</taxon>
        <taxon>Gammaproteobacteria</taxon>
        <taxon>Enterobacterales</taxon>
        <taxon>Enterobacteriaceae</taxon>
        <taxon>ant endosymbionts</taxon>
        <taxon>Candidatus Blochmanniella</taxon>
    </lineage>
</organism>
<protein>
    <recommendedName>
        <fullName evidence="1">Probable malate:quinone oxidoreductase</fullName>
        <ecNumber evidence="1">1.1.5.4</ecNumber>
    </recommendedName>
    <alternativeName>
        <fullName evidence="1">MQO</fullName>
    </alternativeName>
    <alternativeName>
        <fullName evidence="1">Malate dehydrogenase [quinone]</fullName>
    </alternativeName>
</protein>
<evidence type="ECO:0000255" key="1">
    <source>
        <dbReference type="HAMAP-Rule" id="MF_00212"/>
    </source>
</evidence>
<feature type="chain" id="PRO_0000325487" description="Probable malate:quinone oxidoreductase">
    <location>
        <begin position="1"/>
        <end position="515"/>
    </location>
</feature>
<gene>
    <name evidence="1" type="primary">mqo</name>
    <name type="ordered locus">BPEN_548</name>
</gene>
<dbReference type="EC" id="1.1.5.4" evidence="1"/>
<dbReference type="EMBL" id="CP000016">
    <property type="protein sequence ID" value="AAZ41158.1"/>
    <property type="molecule type" value="Genomic_DNA"/>
</dbReference>
<dbReference type="RefSeq" id="WP_011283069.1">
    <property type="nucleotide sequence ID" value="NC_007292.1"/>
</dbReference>
<dbReference type="SMR" id="Q492E3"/>
<dbReference type="STRING" id="291272.BPEN_548"/>
<dbReference type="KEGG" id="bpn:BPEN_548"/>
<dbReference type="eggNOG" id="COG0579">
    <property type="taxonomic scope" value="Bacteria"/>
</dbReference>
<dbReference type="HOGENOM" id="CLU_028151_0_0_6"/>
<dbReference type="OrthoDB" id="9763983at2"/>
<dbReference type="UniPathway" id="UPA00223">
    <property type="reaction ID" value="UER01008"/>
</dbReference>
<dbReference type="Proteomes" id="UP000007794">
    <property type="component" value="Chromosome"/>
</dbReference>
<dbReference type="GO" id="GO:0047545">
    <property type="term" value="F:2-hydroxyglutarate dehydrogenase activity"/>
    <property type="evidence" value="ECO:0007669"/>
    <property type="project" value="TreeGrafter"/>
</dbReference>
<dbReference type="GO" id="GO:0008924">
    <property type="term" value="F:L-malate dehydrogenase (quinone) activity"/>
    <property type="evidence" value="ECO:0007669"/>
    <property type="project" value="UniProtKB-UniRule"/>
</dbReference>
<dbReference type="GO" id="GO:0006099">
    <property type="term" value="P:tricarboxylic acid cycle"/>
    <property type="evidence" value="ECO:0007669"/>
    <property type="project" value="UniProtKB-UniRule"/>
</dbReference>
<dbReference type="HAMAP" id="MF_00212">
    <property type="entry name" value="MQO"/>
    <property type="match status" value="1"/>
</dbReference>
<dbReference type="InterPro" id="IPR036188">
    <property type="entry name" value="FAD/NAD-bd_sf"/>
</dbReference>
<dbReference type="InterPro" id="IPR006231">
    <property type="entry name" value="MQO"/>
</dbReference>
<dbReference type="NCBIfam" id="TIGR01320">
    <property type="entry name" value="mal_quin_oxido"/>
    <property type="match status" value="1"/>
</dbReference>
<dbReference type="NCBIfam" id="NF003603">
    <property type="entry name" value="PRK05257.1-1"/>
    <property type="match status" value="1"/>
</dbReference>
<dbReference type="NCBIfam" id="NF003605">
    <property type="entry name" value="PRK05257.1-4"/>
    <property type="match status" value="1"/>
</dbReference>
<dbReference type="NCBIfam" id="NF003606">
    <property type="entry name" value="PRK05257.2-1"/>
    <property type="match status" value="1"/>
</dbReference>
<dbReference type="NCBIfam" id="NF003611">
    <property type="entry name" value="PRK05257.3-2"/>
    <property type="match status" value="1"/>
</dbReference>
<dbReference type="NCBIfam" id="NF009875">
    <property type="entry name" value="PRK13339.1"/>
    <property type="match status" value="1"/>
</dbReference>
<dbReference type="PANTHER" id="PTHR43104">
    <property type="entry name" value="L-2-HYDROXYGLUTARATE DEHYDROGENASE, MITOCHONDRIAL"/>
    <property type="match status" value="1"/>
</dbReference>
<dbReference type="PANTHER" id="PTHR43104:SF2">
    <property type="entry name" value="L-2-HYDROXYGLUTARATE DEHYDROGENASE, MITOCHONDRIAL"/>
    <property type="match status" value="1"/>
</dbReference>
<dbReference type="Pfam" id="PF06039">
    <property type="entry name" value="Mqo"/>
    <property type="match status" value="1"/>
</dbReference>
<dbReference type="SUPFAM" id="SSF51905">
    <property type="entry name" value="FAD/NAD(P)-binding domain"/>
    <property type="match status" value="1"/>
</dbReference>
<proteinExistence type="inferred from homology"/>
<reference key="1">
    <citation type="journal article" date="2005" name="Genome Res.">
        <title>Genome sequence of Blochmannia pennsylvanicus indicates parallel evolutionary trends among bacterial mutualists of insects.</title>
        <authorList>
            <person name="Degnan P.H."/>
            <person name="Lazarus A.B."/>
            <person name="Wernegreen J.J."/>
        </authorList>
    </citation>
    <scope>NUCLEOTIDE SEQUENCE [LARGE SCALE GENOMIC DNA]</scope>
    <source>
        <strain>BPEN</strain>
    </source>
</reference>
<keyword id="KW-0274">FAD</keyword>
<keyword id="KW-0285">Flavoprotein</keyword>
<keyword id="KW-0560">Oxidoreductase</keyword>
<keyword id="KW-1185">Reference proteome</keyword>
<keyword id="KW-0816">Tricarboxylic acid cycle</keyword>
<name>MQO_BLOPB</name>
<sequence length="515" mass="58085">MSNVAVINQQHRLIKITSSADIVLIGAGIMSATFGMFLTILEPTWRIHIYERLSQPAQESSNVWNNAGTGHAAFCELNYTQYNNKNCSVDISKAIAVNEAFEISRQFWAYLVEIKVLKYPSSFINNVPHMSFVWGEENVCFLKKRFQALLNSVLFSGMVYSEDLQQIRQWTPLIIDGRNVSQKIAATRMEMGTDVNFGALTQQLLNELKKNVNFKMYLQHDVVSVQNNNDATWDVHVIDRRCKHKKCIRTNYVFIGAGGRSLNLLQTSGIPEVYGYAGFPVGGQFLVTKNPKIVEQHLAKVYGKASVNAPPMSVPHIDTRILNGEKILLFGPFATFSSKFLKYGSWLDLFHSLNKHNVIPILQAGIDNFDLIKYLISQLVMSNMNRIDELREYYPTVNPSDWTLVTAGQRVQIIKRNSNRRGILQFGTEVVNSGDGTLSALLGASPGASTVVSIILQLLNTMFNNKINSDVWKNKLIDMIPSYTKNLNGDLILVNKIRQYTCNALKLNYIEAIDR</sequence>
<accession>Q492E3</accession>
<comment type="catalytic activity">
    <reaction evidence="1">
        <text>(S)-malate + a quinone = a quinol + oxaloacetate</text>
        <dbReference type="Rhea" id="RHEA:46012"/>
        <dbReference type="ChEBI" id="CHEBI:15589"/>
        <dbReference type="ChEBI" id="CHEBI:16452"/>
        <dbReference type="ChEBI" id="CHEBI:24646"/>
        <dbReference type="ChEBI" id="CHEBI:132124"/>
        <dbReference type="EC" id="1.1.5.4"/>
    </reaction>
</comment>
<comment type="cofactor">
    <cofactor evidence="1">
        <name>FAD</name>
        <dbReference type="ChEBI" id="CHEBI:57692"/>
    </cofactor>
</comment>
<comment type="pathway">
    <text evidence="1">Carbohydrate metabolism; tricarboxylic acid cycle; oxaloacetate from (S)-malate (quinone route): step 1/1.</text>
</comment>
<comment type="similarity">
    <text evidence="1">Belongs to the MQO family.</text>
</comment>